<gene>
    <name evidence="1" type="primary">recR</name>
    <name type="ordered locus">Sputw3181_1708</name>
</gene>
<accession>A1RIQ0</accession>
<keyword id="KW-0227">DNA damage</keyword>
<keyword id="KW-0233">DNA recombination</keyword>
<keyword id="KW-0234">DNA repair</keyword>
<keyword id="KW-0479">Metal-binding</keyword>
<keyword id="KW-0862">Zinc</keyword>
<keyword id="KW-0863">Zinc-finger</keyword>
<name>RECR_SHESW</name>
<sequence>MKFSPLLDELIQSLRCLPGVGPKSAQRMAFQLLERDRKAGLKLASALSSAMSDVGHCQSCRTYTEETLCPICASHKRGSSSTICVVETPADVLAIEAGGHFTGRYFVLLGHLSPLDGVGPEELGLALLERHLASGDVSELILATNPTVEGEATAHFIADMARRHKVMISRIAHGVPVGGELEYVDSTTLALSFNGRLPL</sequence>
<evidence type="ECO:0000255" key="1">
    <source>
        <dbReference type="HAMAP-Rule" id="MF_00017"/>
    </source>
</evidence>
<organism>
    <name type="scientific">Shewanella sp. (strain W3-18-1)</name>
    <dbReference type="NCBI Taxonomy" id="351745"/>
    <lineage>
        <taxon>Bacteria</taxon>
        <taxon>Pseudomonadati</taxon>
        <taxon>Pseudomonadota</taxon>
        <taxon>Gammaproteobacteria</taxon>
        <taxon>Alteromonadales</taxon>
        <taxon>Shewanellaceae</taxon>
        <taxon>Shewanella</taxon>
    </lineage>
</organism>
<feature type="chain" id="PRO_1000001610" description="Recombination protein RecR">
    <location>
        <begin position="1"/>
        <end position="199"/>
    </location>
</feature>
<feature type="domain" description="Toprim" evidence="1">
    <location>
        <begin position="81"/>
        <end position="176"/>
    </location>
</feature>
<feature type="zinc finger region" description="C4-type" evidence="1">
    <location>
        <begin position="57"/>
        <end position="72"/>
    </location>
</feature>
<protein>
    <recommendedName>
        <fullName evidence="1">Recombination protein RecR</fullName>
    </recommendedName>
</protein>
<reference key="1">
    <citation type="submission" date="2006-12" db="EMBL/GenBank/DDBJ databases">
        <title>Complete sequence of Shewanella sp. W3-18-1.</title>
        <authorList>
            <consortium name="US DOE Joint Genome Institute"/>
            <person name="Copeland A."/>
            <person name="Lucas S."/>
            <person name="Lapidus A."/>
            <person name="Barry K."/>
            <person name="Detter J.C."/>
            <person name="Glavina del Rio T."/>
            <person name="Hammon N."/>
            <person name="Israni S."/>
            <person name="Dalin E."/>
            <person name="Tice H."/>
            <person name="Pitluck S."/>
            <person name="Chain P."/>
            <person name="Malfatti S."/>
            <person name="Shin M."/>
            <person name="Vergez L."/>
            <person name="Schmutz J."/>
            <person name="Larimer F."/>
            <person name="Land M."/>
            <person name="Hauser L."/>
            <person name="Kyrpides N."/>
            <person name="Lykidis A."/>
            <person name="Tiedje J."/>
            <person name="Richardson P."/>
        </authorList>
    </citation>
    <scope>NUCLEOTIDE SEQUENCE [LARGE SCALE GENOMIC DNA]</scope>
    <source>
        <strain>W3-18-1</strain>
    </source>
</reference>
<proteinExistence type="inferred from homology"/>
<dbReference type="EMBL" id="CP000503">
    <property type="protein sequence ID" value="ABM24545.1"/>
    <property type="molecule type" value="Genomic_DNA"/>
</dbReference>
<dbReference type="RefSeq" id="WP_011789042.1">
    <property type="nucleotide sequence ID" value="NC_008750.1"/>
</dbReference>
<dbReference type="SMR" id="A1RIQ0"/>
<dbReference type="GeneID" id="67443886"/>
<dbReference type="KEGG" id="shw:Sputw3181_1708"/>
<dbReference type="HOGENOM" id="CLU_060739_1_2_6"/>
<dbReference type="Proteomes" id="UP000002597">
    <property type="component" value="Chromosome"/>
</dbReference>
<dbReference type="GO" id="GO:0003677">
    <property type="term" value="F:DNA binding"/>
    <property type="evidence" value="ECO:0007669"/>
    <property type="project" value="UniProtKB-UniRule"/>
</dbReference>
<dbReference type="GO" id="GO:0008270">
    <property type="term" value="F:zinc ion binding"/>
    <property type="evidence" value="ECO:0007669"/>
    <property type="project" value="UniProtKB-KW"/>
</dbReference>
<dbReference type="GO" id="GO:0006310">
    <property type="term" value="P:DNA recombination"/>
    <property type="evidence" value="ECO:0007669"/>
    <property type="project" value="UniProtKB-UniRule"/>
</dbReference>
<dbReference type="GO" id="GO:0006281">
    <property type="term" value="P:DNA repair"/>
    <property type="evidence" value="ECO:0007669"/>
    <property type="project" value="UniProtKB-UniRule"/>
</dbReference>
<dbReference type="CDD" id="cd01025">
    <property type="entry name" value="TOPRIM_recR"/>
    <property type="match status" value="1"/>
</dbReference>
<dbReference type="FunFam" id="1.10.8.420:FF:000001">
    <property type="entry name" value="Recombination protein RecR"/>
    <property type="match status" value="1"/>
</dbReference>
<dbReference type="FunFam" id="3.40.1360.10:FF:000001">
    <property type="entry name" value="Recombination protein RecR"/>
    <property type="match status" value="1"/>
</dbReference>
<dbReference type="Gene3D" id="3.40.1360.10">
    <property type="match status" value="1"/>
</dbReference>
<dbReference type="Gene3D" id="6.10.250.240">
    <property type="match status" value="1"/>
</dbReference>
<dbReference type="Gene3D" id="1.10.8.420">
    <property type="entry name" value="RecR Domain 1"/>
    <property type="match status" value="1"/>
</dbReference>
<dbReference type="HAMAP" id="MF_00017">
    <property type="entry name" value="RecR"/>
    <property type="match status" value="1"/>
</dbReference>
<dbReference type="InterPro" id="IPR000093">
    <property type="entry name" value="DNA_Rcmb_RecR"/>
</dbReference>
<dbReference type="InterPro" id="IPR023627">
    <property type="entry name" value="Rcmb_RecR"/>
</dbReference>
<dbReference type="InterPro" id="IPR015967">
    <property type="entry name" value="Rcmb_RecR_Znf"/>
</dbReference>
<dbReference type="InterPro" id="IPR006171">
    <property type="entry name" value="TOPRIM_dom"/>
</dbReference>
<dbReference type="InterPro" id="IPR034137">
    <property type="entry name" value="TOPRIM_RecR"/>
</dbReference>
<dbReference type="NCBIfam" id="TIGR00615">
    <property type="entry name" value="recR"/>
    <property type="match status" value="1"/>
</dbReference>
<dbReference type="PANTHER" id="PTHR30446">
    <property type="entry name" value="RECOMBINATION PROTEIN RECR"/>
    <property type="match status" value="1"/>
</dbReference>
<dbReference type="PANTHER" id="PTHR30446:SF0">
    <property type="entry name" value="RECOMBINATION PROTEIN RECR"/>
    <property type="match status" value="1"/>
</dbReference>
<dbReference type="Pfam" id="PF21175">
    <property type="entry name" value="RecR_C"/>
    <property type="match status" value="1"/>
</dbReference>
<dbReference type="Pfam" id="PF21176">
    <property type="entry name" value="RecR_HhH"/>
    <property type="match status" value="1"/>
</dbReference>
<dbReference type="Pfam" id="PF02132">
    <property type="entry name" value="RecR_ZnF"/>
    <property type="match status" value="1"/>
</dbReference>
<dbReference type="Pfam" id="PF13662">
    <property type="entry name" value="Toprim_4"/>
    <property type="match status" value="1"/>
</dbReference>
<dbReference type="SMART" id="SM00493">
    <property type="entry name" value="TOPRIM"/>
    <property type="match status" value="1"/>
</dbReference>
<dbReference type="SUPFAM" id="SSF111304">
    <property type="entry name" value="Recombination protein RecR"/>
    <property type="match status" value="1"/>
</dbReference>
<dbReference type="PROSITE" id="PS50880">
    <property type="entry name" value="TOPRIM"/>
    <property type="match status" value="1"/>
</dbReference>
<comment type="function">
    <text evidence="1">May play a role in DNA repair. It seems to be involved in an RecBC-independent recombinational process of DNA repair. It may act with RecF and RecO.</text>
</comment>
<comment type="similarity">
    <text evidence="1">Belongs to the RecR family.</text>
</comment>